<protein>
    <recommendedName>
        <fullName evidence="1">Proteasome-associated ATPase</fullName>
    </recommendedName>
    <alternativeName>
        <fullName evidence="1">AAA ATPase forming ring-shaped complexes</fullName>
        <shortName evidence="1">ARC</shortName>
    </alternativeName>
    <alternativeName>
        <fullName evidence="1">Mycobacterial proteasome ATPase</fullName>
    </alternativeName>
</protein>
<comment type="function">
    <text evidence="1">ATPase which is responsible for recognizing, binding, unfolding and translocation of pupylated proteins into the bacterial 20S proteasome core particle. May be essential for opening the gate of the 20S proteasome via an interaction with its C-terminus, thereby allowing substrate entry and access to the site of proteolysis. Thus, the C-termini of the proteasomal ATPase may function like a 'key in a lock' to induce gate opening and therefore regulate proteolysis.</text>
</comment>
<comment type="pathway">
    <text evidence="1">Protein degradation; proteasomal Pup-dependent pathway.</text>
</comment>
<comment type="subunit">
    <text evidence="1">Homohexamer. Assembles into a hexameric ring structure that caps the 20S proteasome core. Strongly interacts with the prokaryotic ubiquitin-like protein Pup through a hydrophobic interface; the interacting region of ARC lies in its N-terminal coiled-coil domain. There is one Pup binding site per ARC hexamer ring. Upon ATP-binding, the C-terminus of ARC interacts with the alpha-rings of the proteasome core, possibly by binding to the intersubunit pockets.</text>
</comment>
<comment type="domain">
    <text evidence="1">Consists of three main regions, an N-terminal coiled-coil domain that binds to protein Pup and functions as a docking station, an interdomain involved in ARC hexamerization, and a C-terminal ATPase domain of the AAA type.</text>
</comment>
<comment type="similarity">
    <text evidence="1">Belongs to the AAA ATPase family.</text>
</comment>
<accession>A1UHT0</accession>
<evidence type="ECO:0000255" key="1">
    <source>
        <dbReference type="HAMAP-Rule" id="MF_02112"/>
    </source>
</evidence>
<evidence type="ECO:0000256" key="2">
    <source>
        <dbReference type="SAM" id="MobiDB-lite"/>
    </source>
</evidence>
<dbReference type="EMBL" id="CP000518">
    <property type="protein sequence ID" value="ABL92388.1"/>
    <property type="molecule type" value="Genomic_DNA"/>
</dbReference>
<dbReference type="SMR" id="A1UHT0"/>
<dbReference type="STRING" id="189918.Mkms_3194"/>
<dbReference type="KEGG" id="mkm:Mkms_3194"/>
<dbReference type="HOGENOM" id="CLU_036054_0_0_11"/>
<dbReference type="OrthoDB" id="9809379at2"/>
<dbReference type="UniPathway" id="UPA00997"/>
<dbReference type="GO" id="GO:0000502">
    <property type="term" value="C:proteasome complex"/>
    <property type="evidence" value="ECO:0007669"/>
    <property type="project" value="UniProtKB-KW"/>
</dbReference>
<dbReference type="GO" id="GO:0005524">
    <property type="term" value="F:ATP binding"/>
    <property type="evidence" value="ECO:0007669"/>
    <property type="project" value="UniProtKB-UniRule"/>
</dbReference>
<dbReference type="GO" id="GO:0016887">
    <property type="term" value="F:ATP hydrolysis activity"/>
    <property type="evidence" value="ECO:0007669"/>
    <property type="project" value="UniProtKB-UniRule"/>
</dbReference>
<dbReference type="GO" id="GO:0019941">
    <property type="term" value="P:modification-dependent protein catabolic process"/>
    <property type="evidence" value="ECO:0007669"/>
    <property type="project" value="InterPro"/>
</dbReference>
<dbReference type="GO" id="GO:0010498">
    <property type="term" value="P:proteasomal protein catabolic process"/>
    <property type="evidence" value="ECO:0007669"/>
    <property type="project" value="InterPro"/>
</dbReference>
<dbReference type="FunFam" id="1.20.5.170:FF:000018">
    <property type="entry name" value="AAA ATPase forming ring-shaped complexes"/>
    <property type="match status" value="1"/>
</dbReference>
<dbReference type="FunFam" id="2.40.50.140:FF:000169">
    <property type="entry name" value="AAA ATPase forming ring-shaped complexes"/>
    <property type="match status" value="1"/>
</dbReference>
<dbReference type="FunFam" id="3.40.50.300:FF:000155">
    <property type="entry name" value="AAA ATPase forming ring-shaped complexes"/>
    <property type="match status" value="1"/>
</dbReference>
<dbReference type="Gene3D" id="1.10.8.60">
    <property type="match status" value="1"/>
</dbReference>
<dbReference type="Gene3D" id="1.20.5.170">
    <property type="match status" value="1"/>
</dbReference>
<dbReference type="Gene3D" id="2.40.50.140">
    <property type="entry name" value="Nucleic acid-binding proteins"/>
    <property type="match status" value="2"/>
</dbReference>
<dbReference type="Gene3D" id="3.40.50.300">
    <property type="entry name" value="P-loop containing nucleotide triphosphate hydrolases"/>
    <property type="match status" value="1"/>
</dbReference>
<dbReference type="HAMAP" id="MF_02112">
    <property type="entry name" value="ARC_ATPase"/>
    <property type="match status" value="1"/>
</dbReference>
<dbReference type="InterPro" id="IPR003593">
    <property type="entry name" value="AAA+_ATPase"/>
</dbReference>
<dbReference type="InterPro" id="IPR050168">
    <property type="entry name" value="AAA_ATPase_domain"/>
</dbReference>
<dbReference type="InterPro" id="IPR003959">
    <property type="entry name" value="ATPase_AAA_core"/>
</dbReference>
<dbReference type="InterPro" id="IPR003960">
    <property type="entry name" value="ATPase_AAA_CS"/>
</dbReference>
<dbReference type="InterPro" id="IPR012340">
    <property type="entry name" value="NA-bd_OB-fold"/>
</dbReference>
<dbReference type="InterPro" id="IPR027417">
    <property type="entry name" value="P-loop_NTPase"/>
</dbReference>
<dbReference type="InterPro" id="IPR032501">
    <property type="entry name" value="Prot_ATP_ID_OB_2nd"/>
</dbReference>
<dbReference type="InterPro" id="IPR041626">
    <property type="entry name" value="Prot_ATP_ID_OB_N"/>
</dbReference>
<dbReference type="InterPro" id="IPR022482">
    <property type="entry name" value="Proteasome_ATPase"/>
</dbReference>
<dbReference type="NCBIfam" id="TIGR03689">
    <property type="entry name" value="pup_AAA"/>
    <property type="match status" value="1"/>
</dbReference>
<dbReference type="PANTHER" id="PTHR23077">
    <property type="entry name" value="AAA-FAMILY ATPASE"/>
    <property type="match status" value="1"/>
</dbReference>
<dbReference type="PANTHER" id="PTHR23077:SF144">
    <property type="entry name" value="PROTEASOME-ASSOCIATED ATPASE"/>
    <property type="match status" value="1"/>
</dbReference>
<dbReference type="Pfam" id="PF00004">
    <property type="entry name" value="AAA"/>
    <property type="match status" value="1"/>
</dbReference>
<dbReference type="Pfam" id="PF16450">
    <property type="entry name" value="Prot_ATP_ID_OB_C"/>
    <property type="match status" value="1"/>
</dbReference>
<dbReference type="Pfam" id="PF17758">
    <property type="entry name" value="Prot_ATP_ID_OB_N"/>
    <property type="match status" value="1"/>
</dbReference>
<dbReference type="SMART" id="SM00382">
    <property type="entry name" value="AAA"/>
    <property type="match status" value="1"/>
</dbReference>
<dbReference type="SUPFAM" id="SSF52540">
    <property type="entry name" value="P-loop containing nucleoside triphosphate hydrolases"/>
    <property type="match status" value="1"/>
</dbReference>
<dbReference type="PROSITE" id="PS00674">
    <property type="entry name" value="AAA"/>
    <property type="match status" value="1"/>
</dbReference>
<name>ARC_MYCSK</name>
<organism>
    <name type="scientific">Mycobacterium sp. (strain KMS)</name>
    <dbReference type="NCBI Taxonomy" id="189918"/>
    <lineage>
        <taxon>Bacteria</taxon>
        <taxon>Bacillati</taxon>
        <taxon>Actinomycetota</taxon>
        <taxon>Actinomycetes</taxon>
        <taxon>Mycobacteriales</taxon>
        <taxon>Mycobacteriaceae</taxon>
        <taxon>Mycobacterium</taxon>
    </lineage>
</organism>
<keyword id="KW-0067">ATP-binding</keyword>
<keyword id="KW-0143">Chaperone</keyword>
<keyword id="KW-0175">Coiled coil</keyword>
<keyword id="KW-0547">Nucleotide-binding</keyword>
<keyword id="KW-0647">Proteasome</keyword>
<reference key="1">
    <citation type="submission" date="2006-12" db="EMBL/GenBank/DDBJ databases">
        <title>Complete sequence of chromosome of Mycobacterium sp. KMS.</title>
        <authorList>
            <consortium name="US DOE Joint Genome Institute"/>
            <person name="Copeland A."/>
            <person name="Lucas S."/>
            <person name="Lapidus A."/>
            <person name="Barry K."/>
            <person name="Detter J.C."/>
            <person name="Glavina del Rio T."/>
            <person name="Hammon N."/>
            <person name="Israni S."/>
            <person name="Dalin E."/>
            <person name="Tice H."/>
            <person name="Pitluck S."/>
            <person name="Kiss H."/>
            <person name="Brettin T."/>
            <person name="Bruce D."/>
            <person name="Han C."/>
            <person name="Tapia R."/>
            <person name="Gilna P."/>
            <person name="Schmutz J."/>
            <person name="Larimer F."/>
            <person name="Land M."/>
            <person name="Hauser L."/>
            <person name="Kyrpides N."/>
            <person name="Mikhailova N."/>
            <person name="Miller C.D."/>
            <person name="Richardson P."/>
        </authorList>
    </citation>
    <scope>NUCLEOTIDE SEQUENCE [LARGE SCALE GENOMIC DNA]</scope>
    <source>
        <strain>KMS</strain>
    </source>
</reference>
<feature type="chain" id="PRO_0000397001" description="Proteasome-associated ATPase">
    <location>
        <begin position="1"/>
        <end position="615"/>
    </location>
</feature>
<feature type="region of interest" description="Disordered" evidence="2">
    <location>
        <begin position="1"/>
        <end position="32"/>
    </location>
</feature>
<feature type="region of interest" description="Docks into pockets in the proteasome alpha-ring" evidence="1">
    <location>
        <begin position="614"/>
        <end position="615"/>
    </location>
</feature>
<feature type="coiled-coil region" evidence="1">
    <location>
        <begin position="22"/>
        <end position="100"/>
    </location>
</feature>
<feature type="compositionally biased region" description="Basic and acidic residues" evidence="2">
    <location>
        <begin position="1"/>
        <end position="13"/>
    </location>
</feature>
<feature type="binding site" evidence="1">
    <location>
        <begin position="302"/>
        <end position="307"/>
    </location>
    <ligand>
        <name>ATP</name>
        <dbReference type="ChEBI" id="CHEBI:30616"/>
    </ligand>
</feature>
<proteinExistence type="inferred from homology"/>
<sequence>MSESQRHEAREDGFTTPHESGLSSEDAAELEELRREAAALREQLENAVGPQSGLRSARDVHQLEARIDSLAARNAKLMDTLKEARQQLLALREEVDRLGQPPSGYGVLLASHEDDTVDVFTSGRKMRLTCSPNIDVKALKQGQTVRLNEALTVVEAGTFEAVGEISTLREILSDGHRALVVGHADEERIVWLAEPLVSVEHLPDNEVAGPELDDDRPRRLRPGDSLLVDTKAGYAFERIPKAEVEDLVLEEVPDVSYSDIGGLTRQIEQIRDAVELPFLHKDLYREYSLRPPKGVLLYGPPGCGKTLIAKAVANSLAKKMAEVRGDDAREAKSYFLNIKGPELLNKFVGETERHIRLIFQRAREKASEGTPVIVFFDEMDSIFRTRGTGVSSDVETTVVPQLLSEIDGVEGLENVIVIGASNREDMIDPAILRPGRLDVKIKIERPDAEAAQDIFSKYLTEELPVNEDDLAEFGGDRSLTIKAMIEKVVDRMYAEIDDNRFLEVTYANGDKEVMYFKDFNSGAMIQNVVDRAKKYAIKSVLETGQKGLRIQHLLDSIVDEFAENEDLPNTTNPDDWARISGKKGERIVYIRTLVTGKSSSANRAIDTESNLGQYL</sequence>
<gene>
    <name evidence="1" type="primary">mpa</name>
    <name type="ordered locus">Mkms_3194</name>
</gene>